<dbReference type="EMBL" id="AE014075">
    <property type="protein sequence ID" value="AAN83428.1"/>
    <property type="molecule type" value="Genomic_DNA"/>
</dbReference>
<dbReference type="RefSeq" id="WP_001252058.1">
    <property type="nucleotide sequence ID" value="NZ_CP051263.1"/>
</dbReference>
<dbReference type="SMR" id="P68184"/>
<dbReference type="STRING" id="199310.c5002"/>
<dbReference type="GeneID" id="86861565"/>
<dbReference type="KEGG" id="ecc:c5002"/>
<dbReference type="eggNOG" id="COG3833">
    <property type="taxonomic scope" value="Bacteria"/>
</dbReference>
<dbReference type="HOGENOM" id="CLU_016047_1_2_6"/>
<dbReference type="BioCyc" id="ECOL199310:C5002-MONOMER"/>
<dbReference type="Proteomes" id="UP000001410">
    <property type="component" value="Chromosome"/>
</dbReference>
<dbReference type="GO" id="GO:0005886">
    <property type="term" value="C:plasma membrane"/>
    <property type="evidence" value="ECO:0007669"/>
    <property type="project" value="UniProtKB-SubCell"/>
</dbReference>
<dbReference type="GO" id="GO:0015423">
    <property type="term" value="F:ABC-type maltose transporter activity"/>
    <property type="evidence" value="ECO:0007669"/>
    <property type="project" value="TreeGrafter"/>
</dbReference>
<dbReference type="GO" id="GO:0042956">
    <property type="term" value="P:maltodextrin transmembrane transport"/>
    <property type="evidence" value="ECO:0007669"/>
    <property type="project" value="TreeGrafter"/>
</dbReference>
<dbReference type="CDD" id="cd06261">
    <property type="entry name" value="TM_PBP2"/>
    <property type="match status" value="1"/>
</dbReference>
<dbReference type="FunFam" id="1.10.3720.10:FF:000010">
    <property type="entry name" value="Maltose ABC transporter permease MalG"/>
    <property type="match status" value="1"/>
</dbReference>
<dbReference type="Gene3D" id="1.10.3720.10">
    <property type="entry name" value="MetI-like"/>
    <property type="match status" value="1"/>
</dbReference>
<dbReference type="InterPro" id="IPR050901">
    <property type="entry name" value="BP-dep_ABC_trans_perm"/>
</dbReference>
<dbReference type="InterPro" id="IPR000515">
    <property type="entry name" value="MetI-like"/>
</dbReference>
<dbReference type="InterPro" id="IPR035906">
    <property type="entry name" value="MetI-like_sf"/>
</dbReference>
<dbReference type="NCBIfam" id="NF008231">
    <property type="entry name" value="PRK10998.1"/>
    <property type="match status" value="1"/>
</dbReference>
<dbReference type="PANTHER" id="PTHR32243">
    <property type="entry name" value="MALTOSE TRANSPORT SYSTEM PERMEASE-RELATED"/>
    <property type="match status" value="1"/>
</dbReference>
<dbReference type="PANTHER" id="PTHR32243:SF50">
    <property type="entry name" value="MALTOSE_MALTODEXTRIN TRANSPORT SYSTEM PERMEASE PROTEIN MALG"/>
    <property type="match status" value="1"/>
</dbReference>
<dbReference type="Pfam" id="PF00528">
    <property type="entry name" value="BPD_transp_1"/>
    <property type="match status" value="1"/>
</dbReference>
<dbReference type="SUPFAM" id="SSF161098">
    <property type="entry name" value="MetI-like"/>
    <property type="match status" value="1"/>
</dbReference>
<dbReference type="PROSITE" id="PS50928">
    <property type="entry name" value="ABC_TM1"/>
    <property type="match status" value="1"/>
</dbReference>
<keyword id="KW-0997">Cell inner membrane</keyword>
<keyword id="KW-1003">Cell membrane</keyword>
<keyword id="KW-0472">Membrane</keyword>
<keyword id="KW-1185">Reference proteome</keyword>
<keyword id="KW-0762">Sugar transport</keyword>
<keyword id="KW-0812">Transmembrane</keyword>
<keyword id="KW-1133">Transmembrane helix</keyword>
<keyword id="KW-0813">Transport</keyword>
<sequence length="296" mass="32225">MAMVQPKSQKARLFITHLLLLLFIAAIMFPLLMVVAISLRQGNFATGSLIPEQISWDHWKLALGFSVEQADGRITPPPFPVLLWLWNSVKVAGISAIGIVALSTTCAYAFARMRFPGKATLLKGMLIFQMFPAVLSLVALYALFDRLGEYIPFIGLNTHGGVIFAYLGGIALHVWTIKGYFETIDSSLEEAAALDGATPWQAFRLVLLPLSVPILAVVFILSFIAAITEVPVASLLLRDVNSYTLAVGMQQYLNPQNYLWGDFAAAAVMSALPITIVFLLAQRWLVNGLTAGGVKG</sequence>
<proteinExistence type="inferred from homology"/>
<gene>
    <name type="primary">malG</name>
    <name type="ordered locus">c5002</name>
</gene>
<feature type="chain" id="PRO_0000060082" description="Maltose/maltodextrin transport system permease protein MalG">
    <location>
        <begin position="1"/>
        <end position="296"/>
    </location>
</feature>
<feature type="topological domain" description="Cytoplasmic" evidence="2">
    <location>
        <begin position="1"/>
        <end position="12"/>
    </location>
</feature>
<feature type="transmembrane region" description="Helical" evidence="3">
    <location>
        <begin position="13"/>
        <end position="35"/>
    </location>
</feature>
<feature type="topological domain" description="Periplasmic" evidence="2">
    <location>
        <begin position="36"/>
        <end position="88"/>
    </location>
</feature>
<feature type="transmembrane region" description="Helical" evidence="3">
    <location>
        <begin position="89"/>
        <end position="111"/>
    </location>
</feature>
<feature type="topological domain" description="Cytoplasmic" evidence="2">
    <location>
        <begin position="112"/>
        <end position="123"/>
    </location>
</feature>
<feature type="transmembrane region" description="Helical" evidence="3">
    <location>
        <begin position="124"/>
        <end position="143"/>
    </location>
</feature>
<feature type="topological domain" description="Periplasmic" evidence="2">
    <location>
        <begin position="144"/>
        <end position="152"/>
    </location>
</feature>
<feature type="transmembrane region" description="Helical" evidence="3">
    <location>
        <begin position="153"/>
        <end position="175"/>
    </location>
</feature>
<feature type="topological domain" description="Cytoplasmic" evidence="2">
    <location>
        <begin position="176"/>
        <end position="204"/>
    </location>
</feature>
<feature type="transmembrane region" description="Helical" evidence="3">
    <location>
        <begin position="205"/>
        <end position="227"/>
    </location>
</feature>
<feature type="topological domain" description="Periplasmic" evidence="2">
    <location>
        <begin position="228"/>
        <end position="257"/>
    </location>
</feature>
<feature type="transmembrane region" description="Helical" evidence="3">
    <location>
        <begin position="258"/>
        <end position="280"/>
    </location>
</feature>
<feature type="topological domain" description="Cytoplasmic" evidence="2">
    <location>
        <begin position="281"/>
        <end position="296"/>
    </location>
</feature>
<feature type="domain" description="ABC transmembrane type-1" evidence="3">
    <location>
        <begin position="85"/>
        <end position="281"/>
    </location>
</feature>
<organism>
    <name type="scientific">Escherichia coli O6:H1 (strain CFT073 / ATCC 700928 / UPEC)</name>
    <dbReference type="NCBI Taxonomy" id="199310"/>
    <lineage>
        <taxon>Bacteria</taxon>
        <taxon>Pseudomonadati</taxon>
        <taxon>Pseudomonadota</taxon>
        <taxon>Gammaproteobacteria</taxon>
        <taxon>Enterobacterales</taxon>
        <taxon>Enterobacteriaceae</taxon>
        <taxon>Escherichia</taxon>
    </lineage>
</organism>
<comment type="function">
    <text evidence="1">Part of the ABC transporter complex MalEFGK involved in maltose/maltodextrin import. Probably responsible for the translocation of the substrate across the membrane.</text>
</comment>
<comment type="subunit">
    <text evidence="1">The complex is composed of two ATP-binding proteins (MalK), two transmembrane proteins (MalG and MalF) and a solute-binding protein (MalE).</text>
</comment>
<comment type="subcellular location">
    <subcellularLocation>
        <location evidence="1">Cell inner membrane</location>
        <topology evidence="1">Multi-pass membrane protein</topology>
    </subcellularLocation>
</comment>
<comment type="similarity">
    <text evidence="4">Belongs to the binding-protein-dependent transport system permease family. MalFG subfamily.</text>
</comment>
<protein>
    <recommendedName>
        <fullName evidence="1">Maltose/maltodextrin transport system permease protein MalG</fullName>
    </recommendedName>
</protein>
<accession>P68184</accession>
<accession>P07622</accession>
<name>MALG_ECOL6</name>
<evidence type="ECO:0000250" key="1">
    <source>
        <dbReference type="UniProtKB" id="P68183"/>
    </source>
</evidence>
<evidence type="ECO:0000255" key="2"/>
<evidence type="ECO:0000255" key="3">
    <source>
        <dbReference type="PROSITE-ProRule" id="PRU00441"/>
    </source>
</evidence>
<evidence type="ECO:0000305" key="4"/>
<reference key="1">
    <citation type="journal article" date="2002" name="Proc. Natl. Acad. Sci. U.S.A.">
        <title>Extensive mosaic structure revealed by the complete genome sequence of uropathogenic Escherichia coli.</title>
        <authorList>
            <person name="Welch R.A."/>
            <person name="Burland V."/>
            <person name="Plunkett G. III"/>
            <person name="Redford P."/>
            <person name="Roesch P."/>
            <person name="Rasko D."/>
            <person name="Buckles E.L."/>
            <person name="Liou S.-R."/>
            <person name="Boutin A."/>
            <person name="Hackett J."/>
            <person name="Stroud D."/>
            <person name="Mayhew G.F."/>
            <person name="Rose D.J."/>
            <person name="Zhou S."/>
            <person name="Schwartz D.C."/>
            <person name="Perna N.T."/>
            <person name="Mobley H.L.T."/>
            <person name="Donnenberg M.S."/>
            <person name="Blattner F.R."/>
        </authorList>
    </citation>
    <scope>NUCLEOTIDE SEQUENCE [LARGE SCALE GENOMIC DNA]</scope>
    <source>
        <strain>CFT073 / ATCC 700928 / UPEC</strain>
    </source>
</reference>